<protein>
    <recommendedName>
        <fullName>Monocarboxylate transporter 9</fullName>
        <shortName>MCT 9</shortName>
    </recommendedName>
    <alternativeName>
        <fullName>Solute carrier family 16 member 9</fullName>
    </alternativeName>
</protein>
<organism>
    <name type="scientific">Rattus norvegicus</name>
    <name type="common">Rat</name>
    <dbReference type="NCBI Taxonomy" id="10116"/>
    <lineage>
        <taxon>Eukaryota</taxon>
        <taxon>Metazoa</taxon>
        <taxon>Chordata</taxon>
        <taxon>Craniata</taxon>
        <taxon>Vertebrata</taxon>
        <taxon>Euteleostomi</taxon>
        <taxon>Mammalia</taxon>
        <taxon>Eutheria</taxon>
        <taxon>Euarchontoglires</taxon>
        <taxon>Glires</taxon>
        <taxon>Rodentia</taxon>
        <taxon>Myomorpha</taxon>
        <taxon>Muroidea</taxon>
        <taxon>Muridae</taxon>
        <taxon>Murinae</taxon>
        <taxon>Rattus</taxon>
    </lineage>
</organism>
<dbReference type="EMBL" id="AABR07044758">
    <property type="status" value="NOT_ANNOTATED_CDS"/>
    <property type="molecule type" value="Genomic_DNA"/>
</dbReference>
<dbReference type="EMBL" id="AABR07044759">
    <property type="status" value="NOT_ANNOTATED_CDS"/>
    <property type="molecule type" value="Genomic_DNA"/>
</dbReference>
<dbReference type="EMBL" id="AABR07044760">
    <property type="status" value="NOT_ANNOTATED_CDS"/>
    <property type="molecule type" value="Genomic_DNA"/>
</dbReference>
<dbReference type="EMBL" id="AABR07044761">
    <property type="status" value="NOT_ANNOTATED_CDS"/>
    <property type="molecule type" value="Genomic_DNA"/>
</dbReference>
<dbReference type="EMBL" id="AABR07044762">
    <property type="status" value="NOT_ANNOTATED_CDS"/>
    <property type="molecule type" value="Genomic_DNA"/>
</dbReference>
<dbReference type="RefSeq" id="NP_001408038.1">
    <property type="nucleotide sequence ID" value="NM_001421109.1"/>
</dbReference>
<dbReference type="RefSeq" id="XP_001080216.1">
    <property type="nucleotide sequence ID" value="XM_001080216.4"/>
</dbReference>
<dbReference type="RefSeq" id="XP_006223930.1">
    <property type="nucleotide sequence ID" value="XM_006223868.2"/>
</dbReference>
<dbReference type="RefSeq" id="XP_017443539.1">
    <property type="nucleotide sequence ID" value="XM_017588050.1"/>
</dbReference>
<dbReference type="SMR" id="M0RCI4"/>
<dbReference type="FunCoup" id="M0RCI4">
    <property type="interactions" value="203"/>
</dbReference>
<dbReference type="STRING" id="10116.ENSRNOP00000067303"/>
<dbReference type="PhosphoSitePlus" id="M0RCI4"/>
<dbReference type="PaxDb" id="10116-ENSRNOP00000067303"/>
<dbReference type="Ensembl" id="ENSRNOT00000074657.3">
    <property type="protein sequence ID" value="ENSRNOP00000067303.3"/>
    <property type="gene ID" value="ENSRNOG00000049063.3"/>
</dbReference>
<dbReference type="GeneID" id="687808"/>
<dbReference type="AGR" id="RGD:1596295"/>
<dbReference type="RGD" id="1596295">
    <property type="gene designation" value="Slc16a9"/>
</dbReference>
<dbReference type="VEuPathDB" id="HostDB:ENSRNOG00000049063"/>
<dbReference type="eggNOG" id="KOG2504">
    <property type="taxonomic scope" value="Eukaryota"/>
</dbReference>
<dbReference type="GeneTree" id="ENSGT00940000156416"/>
<dbReference type="HOGENOM" id="CLU_001265_59_1_1"/>
<dbReference type="InParanoid" id="M0RCI4"/>
<dbReference type="OMA" id="WLHTYQE"/>
<dbReference type="OrthoDB" id="6509908at2759"/>
<dbReference type="PRO" id="PR:M0RCI4"/>
<dbReference type="Proteomes" id="UP000002494">
    <property type="component" value="Chromosome 20"/>
</dbReference>
<dbReference type="Bgee" id="ENSRNOG00000049063">
    <property type="expression patterns" value="Expressed in adult mammalian kidney and 18 other cell types or tissues"/>
</dbReference>
<dbReference type="GO" id="GO:0005886">
    <property type="term" value="C:plasma membrane"/>
    <property type="evidence" value="ECO:0000314"/>
    <property type="project" value="UniProtKB"/>
</dbReference>
<dbReference type="GO" id="GO:0015226">
    <property type="term" value="F:carnitine transmembrane transporter activity"/>
    <property type="evidence" value="ECO:0000266"/>
    <property type="project" value="RGD"/>
</dbReference>
<dbReference type="GO" id="GO:0005308">
    <property type="term" value="F:creatine transmembrane transporter activity"/>
    <property type="evidence" value="ECO:0000315"/>
    <property type="project" value="UniProtKB"/>
</dbReference>
<dbReference type="GO" id="GO:0008028">
    <property type="term" value="F:monocarboxylic acid transmembrane transporter activity"/>
    <property type="evidence" value="ECO:0000318"/>
    <property type="project" value="GO_Central"/>
</dbReference>
<dbReference type="GO" id="GO:1905039">
    <property type="term" value="P:carboxylic acid transmembrane transport"/>
    <property type="evidence" value="ECO:0000318"/>
    <property type="project" value="GO_Central"/>
</dbReference>
<dbReference type="GO" id="GO:1902603">
    <property type="term" value="P:carnitine transmembrane transport"/>
    <property type="evidence" value="ECO:0000266"/>
    <property type="project" value="RGD"/>
</dbReference>
<dbReference type="GO" id="GO:0015881">
    <property type="term" value="P:creatine transmembrane transport"/>
    <property type="evidence" value="ECO:0000315"/>
    <property type="project" value="UniProtKB"/>
</dbReference>
<dbReference type="GO" id="GO:0046415">
    <property type="term" value="P:urate metabolic process"/>
    <property type="evidence" value="ECO:0000266"/>
    <property type="project" value="RGD"/>
</dbReference>
<dbReference type="CDD" id="cd17428">
    <property type="entry name" value="MFS_MCT9"/>
    <property type="match status" value="1"/>
</dbReference>
<dbReference type="FunFam" id="1.20.1250.20:FF:000195">
    <property type="entry name" value="monocarboxylate transporter 9 isoform X1"/>
    <property type="match status" value="1"/>
</dbReference>
<dbReference type="FunFam" id="1.20.1250.20:FF:000127">
    <property type="entry name" value="Monocarboxylate transporter 9 isoform X2"/>
    <property type="match status" value="1"/>
</dbReference>
<dbReference type="Gene3D" id="1.20.1250.20">
    <property type="entry name" value="MFS general substrate transporter like domains"/>
    <property type="match status" value="2"/>
</dbReference>
<dbReference type="InterPro" id="IPR030767">
    <property type="entry name" value="MCT9"/>
</dbReference>
<dbReference type="InterPro" id="IPR011701">
    <property type="entry name" value="MFS"/>
</dbReference>
<dbReference type="InterPro" id="IPR020846">
    <property type="entry name" value="MFS_dom"/>
</dbReference>
<dbReference type="InterPro" id="IPR036259">
    <property type="entry name" value="MFS_trans_sf"/>
</dbReference>
<dbReference type="InterPro" id="IPR050327">
    <property type="entry name" value="Proton-linked_MCT"/>
</dbReference>
<dbReference type="PANTHER" id="PTHR11360">
    <property type="entry name" value="MONOCARBOXYLATE TRANSPORTER"/>
    <property type="match status" value="1"/>
</dbReference>
<dbReference type="PANTHER" id="PTHR11360:SF158">
    <property type="entry name" value="MONOCARBOXYLATE TRANSPORTER 9"/>
    <property type="match status" value="1"/>
</dbReference>
<dbReference type="Pfam" id="PF07690">
    <property type="entry name" value="MFS_1"/>
    <property type="match status" value="2"/>
</dbReference>
<dbReference type="SUPFAM" id="SSF103473">
    <property type="entry name" value="MFS general substrate transporter"/>
    <property type="match status" value="1"/>
</dbReference>
<dbReference type="PROSITE" id="PS50850">
    <property type="entry name" value="MFS"/>
    <property type="match status" value="1"/>
</dbReference>
<gene>
    <name type="primary">Slc16a9</name>
    <name type="synonym">Mct9</name>
</gene>
<feature type="chain" id="PRO_0000457927" description="Monocarboxylate transporter 9">
    <location>
        <begin position="1"/>
        <end position="508"/>
    </location>
</feature>
<feature type="transmembrane region" description="Helical" evidence="2">
    <location>
        <begin position="13"/>
        <end position="33"/>
    </location>
</feature>
<feature type="transmembrane region" description="Helical" evidence="2">
    <location>
        <begin position="53"/>
        <end position="73"/>
    </location>
</feature>
<feature type="transmembrane region" description="Helical" evidence="2">
    <location>
        <begin position="80"/>
        <end position="100"/>
    </location>
</feature>
<feature type="transmembrane region" description="Helical" evidence="2">
    <location>
        <begin position="102"/>
        <end position="122"/>
    </location>
</feature>
<feature type="transmembrane region" description="Helical" evidence="2">
    <location>
        <begin position="137"/>
        <end position="157"/>
    </location>
</feature>
<feature type="transmembrane region" description="Helical" evidence="2">
    <location>
        <begin position="164"/>
        <end position="184"/>
    </location>
</feature>
<feature type="transmembrane region" description="Helical" evidence="2">
    <location>
        <begin position="303"/>
        <end position="323"/>
    </location>
</feature>
<feature type="transmembrane region" description="Helical" evidence="2">
    <location>
        <begin position="341"/>
        <end position="361"/>
    </location>
</feature>
<feature type="transmembrane region" description="Helical" evidence="2">
    <location>
        <begin position="370"/>
        <end position="390"/>
    </location>
</feature>
<feature type="transmembrane region" description="Helical" evidence="2">
    <location>
        <begin position="396"/>
        <end position="416"/>
    </location>
</feature>
<feature type="transmembrane region" description="Helical" evidence="2">
    <location>
        <begin position="431"/>
        <end position="451"/>
    </location>
</feature>
<feature type="transmembrane region" description="Helical" evidence="2">
    <location>
        <begin position="460"/>
        <end position="480"/>
    </location>
</feature>
<feature type="region of interest" description="Disordered" evidence="3">
    <location>
        <begin position="242"/>
        <end position="263"/>
    </location>
</feature>
<proteinExistence type="evidence at transcript level"/>
<comment type="function">
    <text evidence="1 4">Extracellular pH-and Na(+)-sensitive low-affinity creatine transporter (PubMed:34075817). Also functions as a pH-independent carnitine efflux transporter (By similarity).</text>
</comment>
<comment type="catalytic activity">
    <reaction evidence="4">
        <text>creatine(in) = creatine(out)</text>
        <dbReference type="Rhea" id="RHEA:73043"/>
        <dbReference type="ChEBI" id="CHEBI:57947"/>
    </reaction>
    <physiologicalReaction direction="left-to-right" evidence="6">
        <dbReference type="Rhea" id="RHEA:73044"/>
    </physiologicalReaction>
</comment>
<comment type="catalytic activity">
    <reaction evidence="1">
        <text>(R)-carnitine(in) = (R)-carnitine(out)</text>
        <dbReference type="Rhea" id="RHEA:34959"/>
        <dbReference type="ChEBI" id="CHEBI:16347"/>
    </reaction>
</comment>
<comment type="subcellular location">
    <subcellularLocation>
        <location evidence="4">Cell membrane</location>
        <topology evidence="2">Multi-pass membrane protein</topology>
    </subcellularLocation>
</comment>
<comment type="tissue specificity">
    <text evidence="4">Expressed in the liver and kidneys. In the liver localizes on the sinusoidal membrane of the hepatocytes.</text>
</comment>
<comment type="similarity">
    <text evidence="5">Belongs to the major facilitator superfamily. Monocarboxylate porter (TC 2.A.1.13) family.</text>
</comment>
<sequence length="508" mass="55569">MGFQKSPDGGWGWVIVVVSFFTQFLCYGSPLAVGVLYVEWLDAFGEGKGKTAWVGSLASGVGLLASPVCSLFVSSFGARPVTIFSGFLVAGGLMLSSLAPNIYFLFFSYGIVVGLGCGLLYTATVTITCQYFDSRRGLALGLISTGSSVGLFIYAALQRMLIEFYGLDGCLLIVGALALNILACGSLMRPLQTSDCPFPEKIAPENVPDRYSIYNEKEKNQEETMTFQDKGYSNEDKCLPNGDWGRETSLPKNPTGAAHTKEPEPYKKKVVEQTNFCKQLAKRKWQVYRNYCGETASLFKNKVFSALFVAILLFDIGGFPPSLLMEDVARSYHVREEDLTIPLISIFGIMTAVGKLLLGILADFKWVNTLYLYVATLIITGLALCAIPLAKSYVTLAILSGILGFLTGNWSIFPYVTTKTVGIDKLAHAYGILMFFAGLGNSLGPPIVGWFYDWTQTYDIAFYFSGFCVLLGGFILLLAILPCWGMCNQRLPKPAAPTTFFYKVASNV</sequence>
<accession>M0RCI4</accession>
<reference key="1">
    <citation type="journal article" date="2004" name="Nature">
        <title>Genome sequence of the Brown Norway rat yields insights into mammalian evolution.</title>
        <authorList>
            <person name="Gibbs R.A."/>
            <person name="Weinstock G.M."/>
            <person name="Metzker M.L."/>
            <person name="Muzny D.M."/>
            <person name="Sodergren E.J."/>
            <person name="Scherer S."/>
            <person name="Scott G."/>
            <person name="Steffen D."/>
            <person name="Worley K.C."/>
            <person name="Burch P.E."/>
            <person name="Okwuonu G."/>
            <person name="Hines S."/>
            <person name="Lewis L."/>
            <person name="Deramo C."/>
            <person name="Delgado O."/>
            <person name="Dugan-Rocha S."/>
            <person name="Miner G."/>
            <person name="Morgan M."/>
            <person name="Hawes A."/>
            <person name="Gill R."/>
            <person name="Holt R.A."/>
            <person name="Adams M.D."/>
            <person name="Amanatides P.G."/>
            <person name="Baden-Tillson H."/>
            <person name="Barnstead M."/>
            <person name="Chin S."/>
            <person name="Evans C.A."/>
            <person name="Ferriera S."/>
            <person name="Fosler C."/>
            <person name="Glodek A."/>
            <person name="Gu Z."/>
            <person name="Jennings D."/>
            <person name="Kraft C.L."/>
            <person name="Nguyen T."/>
            <person name="Pfannkoch C.M."/>
            <person name="Sitter C."/>
            <person name="Sutton G.G."/>
            <person name="Venter J.C."/>
            <person name="Woodage T."/>
            <person name="Smith D."/>
            <person name="Lee H.-M."/>
            <person name="Gustafson E."/>
            <person name="Cahill P."/>
            <person name="Kana A."/>
            <person name="Doucette-Stamm L."/>
            <person name="Weinstock K."/>
            <person name="Fechtel K."/>
            <person name="Weiss R.B."/>
            <person name="Dunn D.M."/>
            <person name="Green E.D."/>
            <person name="Blakesley R.W."/>
            <person name="Bouffard G.G."/>
            <person name="De Jong P.J."/>
            <person name="Osoegawa K."/>
            <person name="Zhu B."/>
            <person name="Marra M."/>
            <person name="Schein J."/>
            <person name="Bosdet I."/>
            <person name="Fjell C."/>
            <person name="Jones S."/>
            <person name="Krzywinski M."/>
            <person name="Mathewson C."/>
            <person name="Siddiqui A."/>
            <person name="Wye N."/>
            <person name="McPherson J."/>
            <person name="Zhao S."/>
            <person name="Fraser C.M."/>
            <person name="Shetty J."/>
            <person name="Shatsman S."/>
            <person name="Geer K."/>
            <person name="Chen Y."/>
            <person name="Abramzon S."/>
            <person name="Nierman W.C."/>
            <person name="Havlak P.H."/>
            <person name="Chen R."/>
            <person name="Durbin K.J."/>
            <person name="Egan A."/>
            <person name="Ren Y."/>
            <person name="Song X.-Z."/>
            <person name="Li B."/>
            <person name="Liu Y."/>
            <person name="Qin X."/>
            <person name="Cawley S."/>
            <person name="Cooney A.J."/>
            <person name="D'Souza L.M."/>
            <person name="Martin K."/>
            <person name="Wu J.Q."/>
            <person name="Gonzalez-Garay M.L."/>
            <person name="Jackson A.R."/>
            <person name="Kalafus K.J."/>
            <person name="McLeod M.P."/>
            <person name="Milosavljevic A."/>
            <person name="Virk D."/>
            <person name="Volkov A."/>
            <person name="Wheeler D.A."/>
            <person name="Zhang Z."/>
            <person name="Bailey J.A."/>
            <person name="Eichler E.E."/>
            <person name="Tuzun E."/>
            <person name="Birney E."/>
            <person name="Mongin E."/>
            <person name="Ureta-Vidal A."/>
            <person name="Woodwark C."/>
            <person name="Zdobnov E."/>
            <person name="Bork P."/>
            <person name="Suyama M."/>
            <person name="Torrents D."/>
            <person name="Alexandersson M."/>
            <person name="Trask B.J."/>
            <person name="Young J.M."/>
            <person name="Huang H."/>
            <person name="Wang H."/>
            <person name="Xing H."/>
            <person name="Daniels S."/>
            <person name="Gietzen D."/>
            <person name="Schmidt J."/>
            <person name="Stevens K."/>
            <person name="Vitt U."/>
            <person name="Wingrove J."/>
            <person name="Camara F."/>
            <person name="Mar Alba M."/>
            <person name="Abril J.F."/>
            <person name="Guigo R."/>
            <person name="Smit A."/>
            <person name="Dubchak I."/>
            <person name="Rubin E.M."/>
            <person name="Couronne O."/>
            <person name="Poliakov A."/>
            <person name="Huebner N."/>
            <person name="Ganten D."/>
            <person name="Goesele C."/>
            <person name="Hummel O."/>
            <person name="Kreitler T."/>
            <person name="Lee Y.-A."/>
            <person name="Monti J."/>
            <person name="Schulz H."/>
            <person name="Zimdahl H."/>
            <person name="Himmelbauer H."/>
            <person name="Lehrach H."/>
            <person name="Jacob H.J."/>
            <person name="Bromberg S."/>
            <person name="Gullings-Handley J."/>
            <person name="Jensen-Seaman M.I."/>
            <person name="Kwitek A.E."/>
            <person name="Lazar J."/>
            <person name="Pasko D."/>
            <person name="Tonellato P.J."/>
            <person name="Twigger S."/>
            <person name="Ponting C.P."/>
            <person name="Duarte J.M."/>
            <person name="Rice S."/>
            <person name="Goodstadt L."/>
            <person name="Beatson S.A."/>
            <person name="Emes R.D."/>
            <person name="Winter E.E."/>
            <person name="Webber C."/>
            <person name="Brandt P."/>
            <person name="Nyakatura G."/>
            <person name="Adetobi M."/>
            <person name="Chiaromonte F."/>
            <person name="Elnitski L."/>
            <person name="Eswara P."/>
            <person name="Hardison R.C."/>
            <person name="Hou M."/>
            <person name="Kolbe D."/>
            <person name="Makova K."/>
            <person name="Miller W."/>
            <person name="Nekrutenko A."/>
            <person name="Riemer C."/>
            <person name="Schwartz S."/>
            <person name="Taylor J."/>
            <person name="Yang S."/>
            <person name="Zhang Y."/>
            <person name="Lindpaintner K."/>
            <person name="Andrews T.D."/>
            <person name="Caccamo M."/>
            <person name="Clamp M."/>
            <person name="Clarke L."/>
            <person name="Curwen V."/>
            <person name="Durbin R.M."/>
            <person name="Eyras E."/>
            <person name="Searle S.M."/>
            <person name="Cooper G.M."/>
            <person name="Batzoglou S."/>
            <person name="Brudno M."/>
            <person name="Sidow A."/>
            <person name="Stone E.A."/>
            <person name="Payseur B.A."/>
            <person name="Bourque G."/>
            <person name="Lopez-Otin C."/>
            <person name="Puente X.S."/>
            <person name="Chakrabarti K."/>
            <person name="Chatterji S."/>
            <person name="Dewey C."/>
            <person name="Pachter L."/>
            <person name="Bray N."/>
            <person name="Yap V.B."/>
            <person name="Caspi A."/>
            <person name="Tesler G."/>
            <person name="Pevzner P.A."/>
            <person name="Haussler D."/>
            <person name="Roskin K.M."/>
            <person name="Baertsch R."/>
            <person name="Clawson H."/>
            <person name="Furey T.S."/>
            <person name="Hinrichs A.S."/>
            <person name="Karolchik D."/>
            <person name="Kent W.J."/>
            <person name="Rosenbloom K.R."/>
            <person name="Trumbower H."/>
            <person name="Weirauch M."/>
            <person name="Cooper D.N."/>
            <person name="Stenson P.D."/>
            <person name="Ma B."/>
            <person name="Brent M."/>
            <person name="Arumugam M."/>
            <person name="Shteynberg D."/>
            <person name="Copley R.R."/>
            <person name="Taylor M.S."/>
            <person name="Riethman H."/>
            <person name="Mudunuri U."/>
            <person name="Peterson J."/>
            <person name="Guyer M."/>
            <person name="Felsenfeld A."/>
            <person name="Old S."/>
            <person name="Mockrin S."/>
            <person name="Collins F.S."/>
        </authorList>
    </citation>
    <scope>NUCLEOTIDE SEQUENCE [LARGE SCALE GENOMIC DNA]</scope>
    <source>
        <strain>Brown Norway</strain>
    </source>
</reference>
<reference key="2">
    <citation type="journal article" date="2021" name="Am. J. Physiol.">
        <title>Contribution of monocarboxylate transporter 12 to blood supply of creatine on the sinusoidal membrane of the hepatocytes.</title>
        <authorList>
            <person name="Jomura R."/>
            <person name="Tanno Y."/>
            <person name="Akanuma S.I."/>
            <person name="Kubo Y."/>
            <person name="Tachikawa M."/>
            <person name="Hosoya K.I."/>
        </authorList>
    </citation>
    <scope>TISSUE SPECIFICITY</scope>
    <scope>SUBCELLULAR LOCATION</scope>
    <scope>FUNCTION</scope>
    <scope>TRANSPORTER ACTIVITY</scope>
</reference>
<evidence type="ECO:0000250" key="1">
    <source>
        <dbReference type="UniProtKB" id="Q7RTY1"/>
    </source>
</evidence>
<evidence type="ECO:0000255" key="2"/>
<evidence type="ECO:0000256" key="3">
    <source>
        <dbReference type="SAM" id="MobiDB-lite"/>
    </source>
</evidence>
<evidence type="ECO:0000269" key="4">
    <source>
    </source>
</evidence>
<evidence type="ECO:0000305" key="5"/>
<evidence type="ECO:0000305" key="6">
    <source>
    </source>
</evidence>
<name>MOT9_RAT</name>
<keyword id="KW-1003">Cell membrane</keyword>
<keyword id="KW-0472">Membrane</keyword>
<keyword id="KW-1185">Reference proteome</keyword>
<keyword id="KW-0812">Transmembrane</keyword>
<keyword id="KW-1133">Transmembrane helix</keyword>